<sequence length="59" mass="6729">MAVPFRRTSKMKKRLRRTHFKLNVPGMTECPSCGEMKLSHRVCKACGSYNGKDINVKSN</sequence>
<gene>
    <name evidence="1" type="primary">rpmF</name>
    <name type="ordered locus">RBAM_014940</name>
</gene>
<dbReference type="EMBL" id="CP000560">
    <property type="protein sequence ID" value="ABS73857.1"/>
    <property type="molecule type" value="Genomic_DNA"/>
</dbReference>
<dbReference type="RefSeq" id="WP_003154457.1">
    <property type="nucleotide sequence ID" value="NC_009725.2"/>
</dbReference>
<dbReference type="SMR" id="A7Z4D1"/>
<dbReference type="GeneID" id="93080627"/>
<dbReference type="KEGG" id="bay:RBAM_014940"/>
<dbReference type="HOGENOM" id="CLU_129084_1_3_9"/>
<dbReference type="Proteomes" id="UP000001120">
    <property type="component" value="Chromosome"/>
</dbReference>
<dbReference type="GO" id="GO:0015934">
    <property type="term" value="C:large ribosomal subunit"/>
    <property type="evidence" value="ECO:0007669"/>
    <property type="project" value="InterPro"/>
</dbReference>
<dbReference type="GO" id="GO:0003735">
    <property type="term" value="F:structural constituent of ribosome"/>
    <property type="evidence" value="ECO:0007669"/>
    <property type="project" value="InterPro"/>
</dbReference>
<dbReference type="GO" id="GO:0006412">
    <property type="term" value="P:translation"/>
    <property type="evidence" value="ECO:0007669"/>
    <property type="project" value="UniProtKB-UniRule"/>
</dbReference>
<dbReference type="HAMAP" id="MF_00340">
    <property type="entry name" value="Ribosomal_bL32"/>
    <property type="match status" value="1"/>
</dbReference>
<dbReference type="InterPro" id="IPR002677">
    <property type="entry name" value="Ribosomal_bL32"/>
</dbReference>
<dbReference type="InterPro" id="IPR044957">
    <property type="entry name" value="Ribosomal_bL32_bact"/>
</dbReference>
<dbReference type="InterPro" id="IPR011332">
    <property type="entry name" value="Ribosomal_zn-bd"/>
</dbReference>
<dbReference type="NCBIfam" id="TIGR01031">
    <property type="entry name" value="rpmF_bact"/>
    <property type="match status" value="1"/>
</dbReference>
<dbReference type="PANTHER" id="PTHR35534">
    <property type="entry name" value="50S RIBOSOMAL PROTEIN L32"/>
    <property type="match status" value="1"/>
</dbReference>
<dbReference type="PANTHER" id="PTHR35534:SF2">
    <property type="entry name" value="LARGE RIBOSOMAL SUBUNIT PROTEIN BL32"/>
    <property type="match status" value="1"/>
</dbReference>
<dbReference type="Pfam" id="PF01783">
    <property type="entry name" value="Ribosomal_L32p"/>
    <property type="match status" value="1"/>
</dbReference>
<dbReference type="SUPFAM" id="SSF57829">
    <property type="entry name" value="Zn-binding ribosomal proteins"/>
    <property type="match status" value="1"/>
</dbReference>
<name>RL32_BACVZ</name>
<keyword id="KW-0687">Ribonucleoprotein</keyword>
<keyword id="KW-0689">Ribosomal protein</keyword>
<proteinExistence type="inferred from homology"/>
<protein>
    <recommendedName>
        <fullName evidence="1">Large ribosomal subunit protein bL32</fullName>
    </recommendedName>
    <alternativeName>
        <fullName evidence="2">50S ribosomal protein L32</fullName>
    </alternativeName>
</protein>
<reference key="1">
    <citation type="journal article" date="2007" name="Nat. Biotechnol.">
        <title>Comparative analysis of the complete genome sequence of the plant growth-promoting bacterium Bacillus amyloliquefaciens FZB42.</title>
        <authorList>
            <person name="Chen X.H."/>
            <person name="Koumoutsi A."/>
            <person name="Scholz R."/>
            <person name="Eisenreich A."/>
            <person name="Schneider K."/>
            <person name="Heinemeyer I."/>
            <person name="Morgenstern B."/>
            <person name="Voss B."/>
            <person name="Hess W.R."/>
            <person name="Reva O."/>
            <person name="Junge H."/>
            <person name="Voigt B."/>
            <person name="Jungblut P.R."/>
            <person name="Vater J."/>
            <person name="Suessmuth R."/>
            <person name="Liesegang H."/>
            <person name="Strittmatter A."/>
            <person name="Gottschalk G."/>
            <person name="Borriss R."/>
        </authorList>
    </citation>
    <scope>NUCLEOTIDE SEQUENCE [LARGE SCALE GENOMIC DNA]</scope>
    <source>
        <strain>DSM 23117 / BGSC 10A6 / LMG 26770 / FZB42</strain>
    </source>
</reference>
<accession>A7Z4D1</accession>
<feature type="chain" id="PRO_1000005045" description="Large ribosomal subunit protein bL32">
    <location>
        <begin position="1"/>
        <end position="59"/>
    </location>
</feature>
<comment type="similarity">
    <text evidence="1">Belongs to the bacterial ribosomal protein bL32 family.</text>
</comment>
<evidence type="ECO:0000255" key="1">
    <source>
        <dbReference type="HAMAP-Rule" id="MF_00340"/>
    </source>
</evidence>
<evidence type="ECO:0000305" key="2"/>
<organism>
    <name type="scientific">Bacillus velezensis (strain DSM 23117 / BGSC 10A6 / LMG 26770 / FZB42)</name>
    <name type="common">Bacillus amyloliquefaciens subsp. plantarum</name>
    <dbReference type="NCBI Taxonomy" id="326423"/>
    <lineage>
        <taxon>Bacteria</taxon>
        <taxon>Bacillati</taxon>
        <taxon>Bacillota</taxon>
        <taxon>Bacilli</taxon>
        <taxon>Bacillales</taxon>
        <taxon>Bacillaceae</taxon>
        <taxon>Bacillus</taxon>
        <taxon>Bacillus amyloliquefaciens group</taxon>
    </lineage>
</organism>